<sequence>MAAMSEEGSCVNFKEMMFIDNTLYLIPEDNGDLESDHFGRLHCTTAVIRSINDQVLFVDKRNPPVFEDMPDIDRTANESQTRLIIYMYKDSEVRGLAVTLSVKDGRMSTLSCKNKIISFEEMNPPENIDDIKSDLIFFQKRVPGHNKMEFESSLYEGHFLACQKEDDAFKLVLKRKDENGDKSVMFTLTNLHQS</sequence>
<keyword id="KW-0025">Alternative splicing</keyword>
<keyword id="KW-0202">Cytokine</keyword>
<keyword id="KW-0963">Cytoplasm</keyword>
<keyword id="KW-0395">Inflammatory response</keyword>
<keyword id="KW-1185">Reference proteome</keyword>
<keyword id="KW-0964">Secreted</keyword>
<feature type="propeptide" id="PRO_0000015349" evidence="1">
    <location>
        <begin position="1"/>
        <end position="36"/>
    </location>
</feature>
<feature type="chain" id="PRO_0000015350" description="Interleukin-18">
    <location>
        <begin position="37"/>
        <end position="194"/>
    </location>
</feature>
<feature type="site" description="Cleavage; by CASP1" evidence="2">
    <location>
        <begin position="36"/>
        <end position="37"/>
    </location>
</feature>
<feature type="site" description="Cleavage; by CASP3" evidence="2">
    <location>
        <begin position="71"/>
        <end position="72"/>
    </location>
</feature>
<feature type="splice variant" id="VSP_002659" description="In isoform Alpha." evidence="3">
    <location>
        <begin position="121"/>
        <end position="139"/>
    </location>
</feature>
<feature type="sequence conflict" description="In Ref. 2; CAA11001 and 4; AAL77211." evidence="4" ref="2 4">
    <original>MS</original>
    <variation>IP</variation>
    <location>
        <begin position="4"/>
        <end position="5"/>
    </location>
</feature>
<feature type="sequence conflict" description="In Ref. 2; CAA11001 and 4; AAL77211." evidence="4" ref="2 4">
    <original>I</original>
    <variation>M</variation>
    <location>
        <position position="48"/>
    </location>
</feature>
<proteinExistence type="evidence at transcript level"/>
<reference key="1">
    <citation type="journal article" date="1997" name="J. Biol. Chem.">
        <title>Induction of interferon-gamma inducing factor in the adrenal cortex.</title>
        <authorList>
            <person name="Conti B."/>
            <person name="Jahng J.W."/>
            <person name="Tinti C."/>
            <person name="Son J.H."/>
            <person name="Joh T.H."/>
        </authorList>
    </citation>
    <scope>NUCLEOTIDE SEQUENCE [MRNA] (ISOFORMS ALPHA AND BETA)</scope>
    <source>
        <strain>Sprague-Dawley</strain>
        <tissue>Adrenal gland</tissue>
    </source>
</reference>
<reference key="2">
    <citation type="journal article" date="1998" name="Mol. Psychiatry">
        <title>Cloning of rat brain interleukin-18 cDNA.</title>
        <authorList>
            <person name="Culhane A.C."/>
            <person name="Hall M.D."/>
            <person name="Rothwell N.J."/>
            <person name="Luheshi G.N."/>
        </authorList>
    </citation>
    <scope>NUCLEOTIDE SEQUENCE [MRNA] (ISOFORM BETA)</scope>
    <source>
        <strain>Sprague-Dawley</strain>
        <tissue>Brain</tissue>
    </source>
</reference>
<reference key="3">
    <citation type="submission" date="2003-03" db="EMBL/GenBank/DDBJ databases">
        <title>Cloning of the cDNA for interleukin-18 in PC12 and expression in Escherichia coli.</title>
        <authorList>
            <person name="Kim S.-J."/>
            <person name="Kim C.-S."/>
            <person name="Song K.-Y."/>
            <person name="Kim J.-S."/>
            <person name="Jung K.-S."/>
        </authorList>
    </citation>
    <scope>NUCLEOTIDE SEQUENCE [MRNA] (ISOFORM BETA)</scope>
    <source>
        <strain>New England Deaconess Hospital</strain>
        <tissue>Adrenal gland</tissue>
    </source>
</reference>
<reference key="4">
    <citation type="journal article" date="2003" name="Kidney Int.">
        <title>IL-18 translational inhibition restricts IFN-gamma expression in crescentic glomerulonephritis.</title>
        <authorList>
            <person name="Garcia G.E."/>
            <person name="Xia Y."/>
            <person name="Ku G."/>
            <person name="Johnson R.J."/>
            <person name="Wilson C.B."/>
            <person name="Feng L."/>
        </authorList>
    </citation>
    <scope>NUCLEOTIDE SEQUENCE [MRNA] (ISOFORM BETA)</scope>
    <source>
        <strain>Fischer 344</strain>
    </source>
</reference>
<protein>
    <recommendedName>
        <fullName>Interleukin-18</fullName>
        <shortName>IL-18</shortName>
    </recommendedName>
    <alternativeName>
        <fullName>Interferon gamma-inducing factor</fullName>
        <shortName>IFN-gamma-inducing factor</shortName>
    </alternativeName>
    <alternativeName>
        <fullName>Interleukin-1 gamma</fullName>
        <shortName>IL-1 gamma</shortName>
    </alternativeName>
</protein>
<gene>
    <name type="primary">Il18</name>
    <name type="synonym">Igif</name>
</gene>
<organism>
    <name type="scientific">Rattus norvegicus</name>
    <name type="common">Rat</name>
    <dbReference type="NCBI Taxonomy" id="10116"/>
    <lineage>
        <taxon>Eukaryota</taxon>
        <taxon>Metazoa</taxon>
        <taxon>Chordata</taxon>
        <taxon>Craniata</taxon>
        <taxon>Vertebrata</taxon>
        <taxon>Euteleostomi</taxon>
        <taxon>Mammalia</taxon>
        <taxon>Eutheria</taxon>
        <taxon>Euarchontoglires</taxon>
        <taxon>Glires</taxon>
        <taxon>Rodentia</taxon>
        <taxon>Myomorpha</taxon>
        <taxon>Muroidea</taxon>
        <taxon>Muridae</taxon>
        <taxon>Murinae</taxon>
        <taxon>Rattus</taxon>
    </lineage>
</organism>
<evidence type="ECO:0000250" key="1">
    <source>
        <dbReference type="UniProtKB" id="P70380"/>
    </source>
</evidence>
<evidence type="ECO:0000250" key="2">
    <source>
        <dbReference type="UniProtKB" id="Q14116"/>
    </source>
</evidence>
<evidence type="ECO:0000303" key="3">
    <source>
    </source>
</evidence>
<evidence type="ECO:0000305" key="4"/>
<comment type="function">
    <text evidence="2">Pro-inflammatory cytokine primarily involved in epithelial barrier repair, polarized T-helper 1 (Th1) cell and natural killer (NK) cell immune responses. Upon binding to IL18R1 and IL18RAP, forms a signaling ternary complex which activates NF-kappa-B, triggering synthesis of inflammatory mediators. Synergizes with IL12/interleukin-12 to induce IFNG synthesis from T-helper 1 (Th1) cells and natural killer (NK) cells. Involved in transduction of inflammation downstream of pyroptosis: its mature form is specifically released in the extracellular milieu by passing through the gasdermin-D (GSDMD) pore.</text>
</comment>
<comment type="subunit">
    <text evidence="2">Forms a ternary complex with ligand-binding receptor subunit IL18R1 and signaling receptor subunit IL18RAP at the plasma membrane. Mature IL18 first binds to IL18R1 forming a low affinity binary complex, which then interacts with IL18RAP to form a high affinity ternary complex that signals inside the cell. Interacts with cargo receptor TMED10; the interaction mediates the translocation from the cytoplasm into the ERGIC (endoplasmic reticulum-Golgi intermediate compartment) and thereby secretion.</text>
</comment>
<comment type="subcellular location">
    <subcellularLocation>
        <location evidence="2">Cytoplasm</location>
        <location evidence="2">Cytosol</location>
    </subcellularLocation>
    <subcellularLocation>
        <location evidence="2">Secreted</location>
    </subcellularLocation>
    <text evidence="2">The precursor is cytosolic. In response to inflammasome-activating signals, cleaved and secreted. Mature form is secreted and released in the extracellular milieu by passing through the gasdermin-D (GSDMD) pore. In contrast, the precursor form is not released, due to the presence of an acidic region that is proteolytically removed by CASP1 during maturation. The secretion is dependent on protein unfolding and facilitated by the cargo receptor TMED10.</text>
</comment>
<comment type="alternative products">
    <event type="alternative splicing"/>
    <isoform>
        <id>P97636-1</id>
        <name>Beta</name>
        <sequence type="displayed"/>
    </isoform>
    <isoform>
        <id>P97636-2</id>
        <name>Alpha</name>
        <sequence type="described" ref="VSP_002659"/>
    </isoform>
</comment>
<comment type="PTM">
    <text evidence="1 2">The pro-IL-18 precursor is processed by CASP1 to yield its mature, active form. The pro-IL-18 precursor is however not processed by Casp4/Casp11 in rodents (By similarity). The pro-IL-18 precursor features autoinhibitory interactions between the propeptide and the post-cleavage-site region, preventing recognition by the IL18R1 receptor. Processing by CASP1 induces conformational changes to generate critical receptor-binding sites. The mature form is then secreted and released in the extracellular milieu by passing through the gasdermin-D (GSDMD) pore. In contrast, cleavage by CASP3 inactivates IL18 (By similarity).</text>
</comment>
<comment type="similarity">
    <text evidence="4">Belongs to the IL-1 family.</text>
</comment>
<dbReference type="EMBL" id="U77776">
    <property type="protein sequence ID" value="AAC53009.1"/>
    <property type="molecule type" value="mRNA"/>
</dbReference>
<dbReference type="EMBL" id="U77777">
    <property type="protein sequence ID" value="AAC53010.1"/>
    <property type="molecule type" value="mRNA"/>
</dbReference>
<dbReference type="EMBL" id="AJ222813">
    <property type="protein sequence ID" value="CAA11001.1"/>
    <property type="molecule type" value="mRNA"/>
</dbReference>
<dbReference type="EMBL" id="AY258448">
    <property type="protein sequence ID" value="AAP14669.1"/>
    <property type="molecule type" value="mRNA"/>
</dbReference>
<dbReference type="EMBL" id="AY077842">
    <property type="protein sequence ID" value="AAL77211.1"/>
    <property type="molecule type" value="mRNA"/>
</dbReference>
<dbReference type="RefSeq" id="NP_062038.1">
    <property type="nucleotide sequence ID" value="NM_019165.1"/>
</dbReference>
<dbReference type="SMR" id="P97636"/>
<dbReference type="FunCoup" id="P97636">
    <property type="interactions" value="154"/>
</dbReference>
<dbReference type="STRING" id="10116.ENSRNOP00000013093"/>
<dbReference type="BindingDB" id="P97636"/>
<dbReference type="PhosphoSitePlus" id="P97636"/>
<dbReference type="PaxDb" id="10116-ENSRNOP00000013093"/>
<dbReference type="GeneID" id="29197"/>
<dbReference type="KEGG" id="rno:29197"/>
<dbReference type="UCSC" id="RGD:2889">
    <molecule id="P97636-1"/>
    <property type="organism name" value="rat"/>
</dbReference>
<dbReference type="AGR" id="RGD:2889"/>
<dbReference type="CTD" id="3606"/>
<dbReference type="RGD" id="2889">
    <property type="gene designation" value="Il18"/>
</dbReference>
<dbReference type="eggNOG" id="ENOG502SDJZ">
    <property type="taxonomic scope" value="Eukaryota"/>
</dbReference>
<dbReference type="InParanoid" id="P97636"/>
<dbReference type="PhylomeDB" id="P97636"/>
<dbReference type="TreeFam" id="TF336297"/>
<dbReference type="Reactome" id="R-RNO-448706">
    <property type="pathway name" value="Interleukin-1 processing"/>
</dbReference>
<dbReference type="Reactome" id="R-RNO-5620971">
    <property type="pathway name" value="Pyroptosis"/>
</dbReference>
<dbReference type="Reactome" id="R-RNO-9012546">
    <property type="pathway name" value="Interleukin-18 signaling"/>
</dbReference>
<dbReference type="PRO" id="PR:P97636"/>
<dbReference type="Proteomes" id="UP000002494">
    <property type="component" value="Unplaced"/>
</dbReference>
<dbReference type="GO" id="GO:0016324">
    <property type="term" value="C:apical plasma membrane"/>
    <property type="evidence" value="ECO:0000314"/>
    <property type="project" value="RGD"/>
</dbReference>
<dbReference type="GO" id="GO:0005829">
    <property type="term" value="C:cytosol"/>
    <property type="evidence" value="ECO:0007669"/>
    <property type="project" value="UniProtKB-SubCell"/>
</dbReference>
<dbReference type="GO" id="GO:0005615">
    <property type="term" value="C:extracellular space"/>
    <property type="evidence" value="ECO:0000314"/>
    <property type="project" value="RGD"/>
</dbReference>
<dbReference type="GO" id="GO:0005125">
    <property type="term" value="F:cytokine activity"/>
    <property type="evidence" value="ECO:0000250"/>
    <property type="project" value="UniProtKB"/>
</dbReference>
<dbReference type="GO" id="GO:0045515">
    <property type="term" value="F:interleukin-18 receptor binding"/>
    <property type="evidence" value="ECO:0000250"/>
    <property type="project" value="UniProtKB"/>
</dbReference>
<dbReference type="GO" id="GO:0048018">
    <property type="term" value="F:receptor ligand activity"/>
    <property type="evidence" value="ECO:0000266"/>
    <property type="project" value="RGD"/>
</dbReference>
<dbReference type="GO" id="GO:0001525">
    <property type="term" value="P:angiogenesis"/>
    <property type="evidence" value="ECO:0000250"/>
    <property type="project" value="UniProtKB"/>
</dbReference>
<dbReference type="GO" id="GO:0008283">
    <property type="term" value="P:cell population proliferation"/>
    <property type="evidence" value="ECO:0000266"/>
    <property type="project" value="RGD"/>
</dbReference>
<dbReference type="GO" id="GO:0071320">
    <property type="term" value="P:cellular response to cAMP"/>
    <property type="evidence" value="ECO:0000270"/>
    <property type="project" value="RGD"/>
</dbReference>
<dbReference type="GO" id="GO:0070301">
    <property type="term" value="P:cellular response to hydrogen peroxide"/>
    <property type="evidence" value="ECO:0000270"/>
    <property type="project" value="RGD"/>
</dbReference>
<dbReference type="GO" id="GO:0071222">
    <property type="term" value="P:cellular response to lipopolysaccharide"/>
    <property type="evidence" value="ECO:0000270"/>
    <property type="project" value="RGD"/>
</dbReference>
<dbReference type="GO" id="GO:0071260">
    <property type="term" value="P:cellular response to mechanical stimulus"/>
    <property type="evidence" value="ECO:0000270"/>
    <property type="project" value="RGD"/>
</dbReference>
<dbReference type="GO" id="GO:0071374">
    <property type="term" value="P:cellular response to parathyroid hormone stimulus"/>
    <property type="evidence" value="ECO:0000270"/>
    <property type="project" value="RGD"/>
</dbReference>
<dbReference type="GO" id="GO:0071375">
    <property type="term" value="P:cellular response to peptide hormone stimulus"/>
    <property type="evidence" value="ECO:0000315"/>
    <property type="project" value="RGD"/>
</dbReference>
<dbReference type="GO" id="GO:0071356">
    <property type="term" value="P:cellular response to tumor necrosis factor"/>
    <property type="evidence" value="ECO:0000270"/>
    <property type="project" value="RGD"/>
</dbReference>
<dbReference type="GO" id="GO:0071346">
    <property type="term" value="P:cellular response to type II interferon"/>
    <property type="evidence" value="ECO:0000270"/>
    <property type="project" value="RGD"/>
</dbReference>
<dbReference type="GO" id="GO:0042632">
    <property type="term" value="P:cholesterol homeostasis"/>
    <property type="evidence" value="ECO:0000266"/>
    <property type="project" value="RGD"/>
</dbReference>
<dbReference type="GO" id="GO:0019221">
    <property type="term" value="P:cytokine-mediated signaling pathway"/>
    <property type="evidence" value="ECO:0000318"/>
    <property type="project" value="GO_Central"/>
</dbReference>
<dbReference type="GO" id="GO:0050830">
    <property type="term" value="P:defense response to Gram-positive bacterium"/>
    <property type="evidence" value="ECO:0000250"/>
    <property type="project" value="UniProtKB"/>
</dbReference>
<dbReference type="GO" id="GO:0050966">
    <property type="term" value="P:detection of mechanical stimulus involved in sensory perception of pain"/>
    <property type="evidence" value="ECO:0000314"/>
    <property type="project" value="RGD"/>
</dbReference>
<dbReference type="GO" id="GO:0048546">
    <property type="term" value="P:digestive tract morphogenesis"/>
    <property type="evidence" value="ECO:0000270"/>
    <property type="project" value="RGD"/>
</dbReference>
<dbReference type="GO" id="GO:0061436">
    <property type="term" value="P:establishment of skin barrier"/>
    <property type="evidence" value="ECO:0000250"/>
    <property type="project" value="UniProtKB"/>
</dbReference>
<dbReference type="GO" id="GO:0008625">
    <property type="term" value="P:extrinsic apoptotic signaling pathway via death domain receptors"/>
    <property type="evidence" value="ECO:0000266"/>
    <property type="project" value="RGD"/>
</dbReference>
<dbReference type="GO" id="GO:0006955">
    <property type="term" value="P:immune response"/>
    <property type="evidence" value="ECO:0000318"/>
    <property type="project" value="GO_Central"/>
</dbReference>
<dbReference type="GO" id="GO:0006954">
    <property type="term" value="P:inflammatory response"/>
    <property type="evidence" value="ECO:0000266"/>
    <property type="project" value="RGD"/>
</dbReference>
<dbReference type="GO" id="GO:0035655">
    <property type="term" value="P:interleukin-18-mediated signaling pathway"/>
    <property type="evidence" value="ECO:0000250"/>
    <property type="project" value="UniProtKB"/>
</dbReference>
<dbReference type="GO" id="GO:0007611">
    <property type="term" value="P:learning or memory"/>
    <property type="evidence" value="ECO:0000304"/>
    <property type="project" value="RGD"/>
</dbReference>
<dbReference type="GO" id="GO:0097421">
    <property type="term" value="P:liver regeneration"/>
    <property type="evidence" value="ECO:0000270"/>
    <property type="project" value="RGD"/>
</dbReference>
<dbReference type="GO" id="GO:0030324">
    <property type="term" value="P:lung development"/>
    <property type="evidence" value="ECO:0000270"/>
    <property type="project" value="RGD"/>
</dbReference>
<dbReference type="GO" id="GO:0030101">
    <property type="term" value="P:natural killer cell activation"/>
    <property type="evidence" value="ECO:0000266"/>
    <property type="project" value="RGD"/>
</dbReference>
<dbReference type="GO" id="GO:0042267">
    <property type="term" value="P:natural killer cell mediated cytotoxicity"/>
    <property type="evidence" value="ECO:0000266"/>
    <property type="project" value="RGD"/>
</dbReference>
<dbReference type="GO" id="GO:0045662">
    <property type="term" value="P:negative regulation of myoblast differentiation"/>
    <property type="evidence" value="ECO:0000266"/>
    <property type="project" value="RGD"/>
</dbReference>
<dbReference type="GO" id="GO:0033030">
    <property type="term" value="P:negative regulation of neutrophil apoptotic process"/>
    <property type="evidence" value="ECO:0000315"/>
    <property type="project" value="RGD"/>
</dbReference>
<dbReference type="GO" id="GO:0042119">
    <property type="term" value="P:neutrophil activation"/>
    <property type="evidence" value="ECO:0000266"/>
    <property type="project" value="RGD"/>
</dbReference>
<dbReference type="GO" id="GO:0001649">
    <property type="term" value="P:osteoblast differentiation"/>
    <property type="evidence" value="ECO:0000270"/>
    <property type="project" value="RGD"/>
</dbReference>
<dbReference type="GO" id="GO:0042104">
    <property type="term" value="P:positive regulation of activated T cell proliferation"/>
    <property type="evidence" value="ECO:0000250"/>
    <property type="project" value="UniProtKB"/>
</dbReference>
<dbReference type="GO" id="GO:0043065">
    <property type="term" value="P:positive regulation of apoptotic process"/>
    <property type="evidence" value="ECO:0000315"/>
    <property type="project" value="RGD"/>
</dbReference>
<dbReference type="GO" id="GO:2000504">
    <property type="term" value="P:positive regulation of blood vessel remodeling"/>
    <property type="evidence" value="ECO:0000314"/>
    <property type="project" value="RGD"/>
</dbReference>
<dbReference type="GO" id="GO:0008284">
    <property type="term" value="P:positive regulation of cell population proliferation"/>
    <property type="evidence" value="ECO:0000266"/>
    <property type="project" value="RGD"/>
</dbReference>
<dbReference type="GO" id="GO:0032722">
    <property type="term" value="P:positive regulation of chemokine production"/>
    <property type="evidence" value="ECO:0000315"/>
    <property type="project" value="RGD"/>
</dbReference>
<dbReference type="GO" id="GO:0120162">
    <property type="term" value="P:positive regulation of cold-induced thermogenesis"/>
    <property type="evidence" value="ECO:0000250"/>
    <property type="project" value="YuBioLab"/>
</dbReference>
<dbReference type="GO" id="GO:0032967">
    <property type="term" value="P:positive regulation of collagen biosynthetic process"/>
    <property type="evidence" value="ECO:0000314"/>
    <property type="project" value="RGD"/>
</dbReference>
<dbReference type="GO" id="GO:0010628">
    <property type="term" value="P:positive regulation of gene expression"/>
    <property type="evidence" value="ECO:0000266"/>
    <property type="project" value="RGD"/>
</dbReference>
<dbReference type="GO" id="GO:0032725">
    <property type="term" value="P:positive regulation of granulocyte macrophage colony-stimulating factor production"/>
    <property type="evidence" value="ECO:0000266"/>
    <property type="project" value="RGD"/>
</dbReference>
<dbReference type="GO" id="GO:2000347">
    <property type="term" value="P:positive regulation of hepatocyte proliferation"/>
    <property type="evidence" value="ECO:0000314"/>
    <property type="project" value="RGD"/>
</dbReference>
<dbReference type="GO" id="GO:0050729">
    <property type="term" value="P:positive regulation of inflammatory response"/>
    <property type="evidence" value="ECO:0000250"/>
    <property type="project" value="UniProtKB"/>
</dbReference>
<dbReference type="GO" id="GO:0032731">
    <property type="term" value="P:positive regulation of interleukin-1 beta production"/>
    <property type="evidence" value="ECO:0000270"/>
    <property type="project" value="RGD"/>
</dbReference>
<dbReference type="GO" id="GO:0032740">
    <property type="term" value="P:positive regulation of interleukin-17 production"/>
    <property type="evidence" value="ECO:0000266"/>
    <property type="project" value="RGD"/>
</dbReference>
<dbReference type="GO" id="GO:0032757">
    <property type="term" value="P:positive regulation of interleukin-8 production"/>
    <property type="evidence" value="ECO:0000314"/>
    <property type="project" value="RGD"/>
</dbReference>
<dbReference type="GO" id="GO:0010744">
    <property type="term" value="P:positive regulation of macrophage derived foam cell differentiation"/>
    <property type="evidence" value="ECO:0000266"/>
    <property type="project" value="RGD"/>
</dbReference>
<dbReference type="GO" id="GO:2000256">
    <property type="term" value="P:positive regulation of male germ cell proliferation"/>
    <property type="evidence" value="ECO:0000314"/>
    <property type="project" value="RGD"/>
</dbReference>
<dbReference type="GO" id="GO:0032819">
    <property type="term" value="P:positive regulation of natural killer cell proliferation"/>
    <property type="evidence" value="ECO:0000266"/>
    <property type="project" value="RGD"/>
</dbReference>
<dbReference type="GO" id="GO:0043525">
    <property type="term" value="P:positive regulation of neuron apoptotic process"/>
    <property type="evidence" value="ECO:0000315"/>
    <property type="project" value="RGD"/>
</dbReference>
<dbReference type="GO" id="GO:0051092">
    <property type="term" value="P:positive regulation of NF-kappaB transcription factor activity"/>
    <property type="evidence" value="ECO:0000250"/>
    <property type="project" value="UniProtKB"/>
</dbReference>
<dbReference type="GO" id="GO:0051142">
    <property type="term" value="P:positive regulation of NK T cell proliferation"/>
    <property type="evidence" value="ECO:0000266"/>
    <property type="project" value="RGD"/>
</dbReference>
<dbReference type="GO" id="GO:1901224">
    <property type="term" value="P:positive regulation of non-canonical NF-kappaB signal transduction"/>
    <property type="evidence" value="ECO:0000266"/>
    <property type="project" value="RGD"/>
</dbReference>
<dbReference type="GO" id="GO:0051897">
    <property type="term" value="P:positive regulation of phosphatidylinositol 3-kinase/protein kinase B signal transduction"/>
    <property type="evidence" value="ECO:0000266"/>
    <property type="project" value="RGD"/>
</dbReference>
<dbReference type="GO" id="GO:0014911">
    <property type="term" value="P:positive regulation of smooth muscle cell migration"/>
    <property type="evidence" value="ECO:0000315"/>
    <property type="project" value="RGD"/>
</dbReference>
<dbReference type="GO" id="GO:0048661">
    <property type="term" value="P:positive regulation of smooth muscle cell proliferation"/>
    <property type="evidence" value="ECO:0000315"/>
    <property type="project" value="RGD"/>
</dbReference>
<dbReference type="GO" id="GO:0032930">
    <property type="term" value="P:positive regulation of superoxide anion generation"/>
    <property type="evidence" value="ECO:0000315"/>
    <property type="project" value="RGD"/>
</dbReference>
<dbReference type="GO" id="GO:2000556">
    <property type="term" value="P:positive regulation of T-helper 1 cell cytokine production"/>
    <property type="evidence" value="ECO:0000250"/>
    <property type="project" value="UniProtKB"/>
</dbReference>
<dbReference type="GO" id="GO:0045630">
    <property type="term" value="P:positive regulation of T-helper 2 cell differentiation"/>
    <property type="evidence" value="ECO:0000266"/>
    <property type="project" value="RGD"/>
</dbReference>
<dbReference type="GO" id="GO:0045944">
    <property type="term" value="P:positive regulation of transcription by RNA polymerase II"/>
    <property type="evidence" value="ECO:0000266"/>
    <property type="project" value="RGD"/>
</dbReference>
<dbReference type="GO" id="GO:0032760">
    <property type="term" value="P:positive regulation of tumor necrosis factor production"/>
    <property type="evidence" value="ECO:0000315"/>
    <property type="project" value="RGD"/>
</dbReference>
<dbReference type="GO" id="GO:0032729">
    <property type="term" value="P:positive regulation of type II interferon production"/>
    <property type="evidence" value="ECO:0000250"/>
    <property type="project" value="UniProtKB"/>
</dbReference>
<dbReference type="GO" id="GO:0043117">
    <property type="term" value="P:positive regulation of vascular permeability"/>
    <property type="evidence" value="ECO:0000315"/>
    <property type="project" value="RGD"/>
</dbReference>
<dbReference type="GO" id="GO:0030155">
    <property type="term" value="P:regulation of cell adhesion"/>
    <property type="evidence" value="ECO:0000250"/>
    <property type="project" value="UniProtKB"/>
</dbReference>
<dbReference type="GO" id="GO:0045188">
    <property type="term" value="P:regulation of circadian sleep/wake cycle, non-REM sleep"/>
    <property type="evidence" value="ECO:0000304"/>
    <property type="project" value="UniProtKB"/>
</dbReference>
<dbReference type="GO" id="GO:0055093">
    <property type="term" value="P:response to hyperoxia"/>
    <property type="evidence" value="ECO:0000270"/>
    <property type="project" value="RGD"/>
</dbReference>
<dbReference type="GO" id="GO:0001666">
    <property type="term" value="P:response to hypoxia"/>
    <property type="evidence" value="ECO:0000315"/>
    <property type="project" value="RGD"/>
</dbReference>
<dbReference type="GO" id="GO:0043434">
    <property type="term" value="P:response to peptide hormone"/>
    <property type="evidence" value="ECO:0000270"/>
    <property type="project" value="RGD"/>
</dbReference>
<dbReference type="GO" id="GO:0030431">
    <property type="term" value="P:sleep"/>
    <property type="evidence" value="ECO:0000314"/>
    <property type="project" value="UniProtKB"/>
</dbReference>
<dbReference type="GO" id="GO:0042088">
    <property type="term" value="P:T-helper 1 type immune response"/>
    <property type="evidence" value="ECO:0000250"/>
    <property type="project" value="UniProtKB"/>
</dbReference>
<dbReference type="GO" id="GO:0070328">
    <property type="term" value="P:triglyceride homeostasis"/>
    <property type="evidence" value="ECO:0000266"/>
    <property type="project" value="RGD"/>
</dbReference>
<dbReference type="CDD" id="cd23298">
    <property type="entry name" value="beta-trefoil_IL18"/>
    <property type="match status" value="1"/>
</dbReference>
<dbReference type="Gene3D" id="2.80.10.50">
    <property type="match status" value="1"/>
</dbReference>
<dbReference type="InterPro" id="IPR015529">
    <property type="entry name" value="IL-18"/>
</dbReference>
<dbReference type="InterPro" id="IPR000975">
    <property type="entry name" value="IL-1_fam"/>
</dbReference>
<dbReference type="InterPro" id="IPR008996">
    <property type="entry name" value="IL1/FGF"/>
</dbReference>
<dbReference type="PANTHER" id="PTHR10078">
    <property type="entry name" value="INTERLEUKIN-1 FAMILY MEMBER"/>
    <property type="match status" value="1"/>
</dbReference>
<dbReference type="PANTHER" id="PTHR10078:SF35">
    <property type="entry name" value="INTERLEUKIN-18"/>
    <property type="match status" value="1"/>
</dbReference>
<dbReference type="Pfam" id="PF00340">
    <property type="entry name" value="IL1"/>
    <property type="match status" value="1"/>
</dbReference>
<dbReference type="PIRSF" id="PIRSF015162">
    <property type="entry name" value="Interleukin_18"/>
    <property type="match status" value="1"/>
</dbReference>
<dbReference type="PRINTS" id="PR01933">
    <property type="entry name" value="INTRLEUKIN18"/>
</dbReference>
<dbReference type="SUPFAM" id="SSF50353">
    <property type="entry name" value="Cytokine"/>
    <property type="match status" value="1"/>
</dbReference>
<name>IL18_RAT</name>
<accession>P97636</accession>
<accession>O88749</accession>
<accession>P97637</accession>
<accession>Q541E6</accession>